<keyword id="KW-0067">ATP-binding</keyword>
<keyword id="KW-0378">Hydrolase</keyword>
<keyword id="KW-0460">Magnesium</keyword>
<keyword id="KW-0479">Metal-binding</keyword>
<keyword id="KW-0511">Multifunctional enzyme</keyword>
<keyword id="KW-0533">Nickel</keyword>
<keyword id="KW-0547">Nucleotide-binding</keyword>
<keyword id="KW-0548">Nucleotidyltransferase</keyword>
<keyword id="KW-1185">Reference proteome</keyword>
<keyword id="KW-0692">RNA repair</keyword>
<keyword id="KW-0694">RNA-binding</keyword>
<keyword id="KW-0808">Transferase</keyword>
<keyword id="KW-0819">tRNA processing</keyword>
<reference key="1">
    <citation type="journal article" date="2003" name="Proc. Natl. Acad. Sci. U.S.A.">
        <title>The complete genome sequence of Chromobacterium violaceum reveals remarkable and exploitable bacterial adaptability.</title>
        <authorList>
            <person name="Vasconcelos A.T.R."/>
            <person name="de Almeida D.F."/>
            <person name="Hungria M."/>
            <person name="Guimaraes C.T."/>
            <person name="Antonio R.V."/>
            <person name="Almeida F.C."/>
            <person name="de Almeida L.G.P."/>
            <person name="de Almeida R."/>
            <person name="Alves-Gomes J.A."/>
            <person name="Andrade E.M."/>
            <person name="Araripe J."/>
            <person name="de Araujo M.F.F."/>
            <person name="Astolfi-Filho S."/>
            <person name="Azevedo V."/>
            <person name="Baptista A.J."/>
            <person name="Bataus L.A.M."/>
            <person name="Batista J.S."/>
            <person name="Belo A."/>
            <person name="van den Berg C."/>
            <person name="Bogo M."/>
            <person name="Bonatto S."/>
            <person name="Bordignon J."/>
            <person name="Brigido M.M."/>
            <person name="Brito C.A."/>
            <person name="Brocchi M."/>
            <person name="Burity H.A."/>
            <person name="Camargo A.A."/>
            <person name="Cardoso D.D.P."/>
            <person name="Carneiro N.P."/>
            <person name="Carraro D.M."/>
            <person name="Carvalho C.M.B."/>
            <person name="Cascardo J.C.M."/>
            <person name="Cavada B.S."/>
            <person name="Chueire L.M.O."/>
            <person name="Creczynski-Pasa T.B."/>
            <person name="Cunha-Junior N.C."/>
            <person name="Fagundes N."/>
            <person name="Falcao C.L."/>
            <person name="Fantinatti F."/>
            <person name="Farias I.P."/>
            <person name="Felipe M.S.S."/>
            <person name="Ferrari L.P."/>
            <person name="Ferro J.A."/>
            <person name="Ferro M.I.T."/>
            <person name="Franco G.R."/>
            <person name="Freitas N.S.A."/>
            <person name="Furlan L.R."/>
            <person name="Gazzinelli R.T."/>
            <person name="Gomes E.A."/>
            <person name="Goncalves P.R."/>
            <person name="Grangeiro T.B."/>
            <person name="Grattapaglia D."/>
            <person name="Grisard E.C."/>
            <person name="Hanna E.S."/>
            <person name="Jardim S.N."/>
            <person name="Laurino J."/>
            <person name="Leoi L.C.T."/>
            <person name="Lima L.F.A."/>
            <person name="Loureiro M.F."/>
            <person name="Lyra M.C.C.P."/>
            <person name="Madeira H.M.F."/>
            <person name="Manfio G.P."/>
            <person name="Maranhao A.Q."/>
            <person name="Martins W.S."/>
            <person name="di Mauro S.M.Z."/>
            <person name="de Medeiros S.R.B."/>
            <person name="Meissner R.V."/>
            <person name="Moreira M.A.M."/>
            <person name="Nascimento F.F."/>
            <person name="Nicolas M.F."/>
            <person name="Oliveira J.G."/>
            <person name="Oliveira S.C."/>
            <person name="Paixao R.F.C."/>
            <person name="Parente J.A."/>
            <person name="Pedrosa F.O."/>
            <person name="Pena S.D.J."/>
            <person name="Pereira J.O."/>
            <person name="Pereira M."/>
            <person name="Pinto L.S.R.C."/>
            <person name="Pinto L.S."/>
            <person name="Porto J.I.R."/>
            <person name="Potrich D.P."/>
            <person name="Ramalho-Neto C.E."/>
            <person name="Reis A.M.M."/>
            <person name="Rigo L.U."/>
            <person name="Rondinelli E."/>
            <person name="Santos E.B.P."/>
            <person name="Santos F.R."/>
            <person name="Schneider M.P.C."/>
            <person name="Seuanez H.N."/>
            <person name="Silva A.M.R."/>
            <person name="da Silva A.L.C."/>
            <person name="Silva D.W."/>
            <person name="Silva R."/>
            <person name="Simoes I.C."/>
            <person name="Simon D."/>
            <person name="Soares C.M.A."/>
            <person name="Soares R.B.A."/>
            <person name="Souza E.M."/>
            <person name="Souza K.R.L."/>
            <person name="Souza R.C."/>
            <person name="Steffens M.B.R."/>
            <person name="Steindel M."/>
            <person name="Teixeira S.R."/>
            <person name="Urmenyi T."/>
            <person name="Vettore A."/>
            <person name="Wassem R."/>
            <person name="Zaha A."/>
            <person name="Simpson A.J.G."/>
        </authorList>
    </citation>
    <scope>NUCLEOTIDE SEQUENCE [LARGE SCALE GENOMIC DNA]</scope>
    <source>
        <strain>ATCC 12472 / DSM 30191 / JCM 1249 / CCUG 213 / NBRC 12614 / NCIMB 9131 / NCTC 9757 / MK</strain>
    </source>
</reference>
<organism>
    <name type="scientific">Chromobacterium violaceum (strain ATCC 12472 / DSM 30191 / JCM 1249 / CCUG 213 / NBRC 12614 / NCIMB 9131 / NCTC 9757 / MK)</name>
    <dbReference type="NCBI Taxonomy" id="243365"/>
    <lineage>
        <taxon>Bacteria</taxon>
        <taxon>Pseudomonadati</taxon>
        <taxon>Pseudomonadota</taxon>
        <taxon>Betaproteobacteria</taxon>
        <taxon>Neisseriales</taxon>
        <taxon>Chromobacteriaceae</taxon>
        <taxon>Chromobacterium</taxon>
    </lineage>
</organism>
<protein>
    <recommendedName>
        <fullName evidence="1">Multifunctional CCA protein</fullName>
    </recommendedName>
    <domain>
        <recommendedName>
            <fullName evidence="1">CCA-adding enzyme</fullName>
            <ecNumber evidence="1">2.7.7.72</ecNumber>
        </recommendedName>
        <alternativeName>
            <fullName evidence="1">CCA tRNA nucleotidyltransferase</fullName>
        </alternativeName>
        <alternativeName>
            <fullName evidence="1">tRNA CCA-pyrophosphorylase</fullName>
        </alternativeName>
        <alternativeName>
            <fullName evidence="1">tRNA adenylyl-/cytidylyl-transferase</fullName>
        </alternativeName>
        <alternativeName>
            <fullName evidence="1">tRNA nucleotidyltransferase</fullName>
        </alternativeName>
        <alternativeName>
            <fullName evidence="1">tRNA-NT</fullName>
        </alternativeName>
    </domain>
    <domain>
        <recommendedName>
            <fullName evidence="1">2'-nucleotidase</fullName>
            <ecNumber evidence="1">3.1.3.-</ecNumber>
        </recommendedName>
    </domain>
    <domain>
        <recommendedName>
            <fullName evidence="1">2',3'-cyclic phosphodiesterase</fullName>
            <ecNumber evidence="1">3.1.4.-</ecNumber>
        </recommendedName>
    </domain>
    <domain>
        <recommendedName>
            <fullName evidence="1">Phosphatase</fullName>
            <ecNumber evidence="1">3.1.3.-</ecNumber>
        </recommendedName>
    </domain>
</protein>
<feature type="chain" id="PRO_0000138974" description="Multifunctional CCA protein">
    <location>
        <begin position="1"/>
        <end position="407"/>
    </location>
</feature>
<feature type="domain" description="HD" evidence="1">
    <location>
        <begin position="225"/>
        <end position="326"/>
    </location>
</feature>
<feature type="binding site" evidence="1">
    <location>
        <position position="8"/>
    </location>
    <ligand>
        <name>ATP</name>
        <dbReference type="ChEBI" id="CHEBI:30616"/>
    </ligand>
</feature>
<feature type="binding site" evidence="1">
    <location>
        <position position="8"/>
    </location>
    <ligand>
        <name>CTP</name>
        <dbReference type="ChEBI" id="CHEBI:37563"/>
    </ligand>
</feature>
<feature type="binding site" evidence="1">
    <location>
        <position position="11"/>
    </location>
    <ligand>
        <name>ATP</name>
        <dbReference type="ChEBI" id="CHEBI:30616"/>
    </ligand>
</feature>
<feature type="binding site" evidence="1">
    <location>
        <position position="11"/>
    </location>
    <ligand>
        <name>CTP</name>
        <dbReference type="ChEBI" id="CHEBI:37563"/>
    </ligand>
</feature>
<feature type="binding site" evidence="1">
    <location>
        <position position="21"/>
    </location>
    <ligand>
        <name>Mg(2+)</name>
        <dbReference type="ChEBI" id="CHEBI:18420"/>
    </ligand>
</feature>
<feature type="binding site" evidence="1">
    <location>
        <position position="23"/>
    </location>
    <ligand>
        <name>Mg(2+)</name>
        <dbReference type="ChEBI" id="CHEBI:18420"/>
    </ligand>
</feature>
<feature type="binding site" evidence="1">
    <location>
        <position position="91"/>
    </location>
    <ligand>
        <name>ATP</name>
        <dbReference type="ChEBI" id="CHEBI:30616"/>
    </ligand>
</feature>
<feature type="binding site" evidence="1">
    <location>
        <position position="91"/>
    </location>
    <ligand>
        <name>CTP</name>
        <dbReference type="ChEBI" id="CHEBI:37563"/>
    </ligand>
</feature>
<feature type="binding site" evidence="1">
    <location>
        <position position="137"/>
    </location>
    <ligand>
        <name>ATP</name>
        <dbReference type="ChEBI" id="CHEBI:30616"/>
    </ligand>
</feature>
<feature type="binding site" evidence="1">
    <location>
        <position position="137"/>
    </location>
    <ligand>
        <name>CTP</name>
        <dbReference type="ChEBI" id="CHEBI:37563"/>
    </ligand>
</feature>
<feature type="binding site" evidence="1">
    <location>
        <position position="140"/>
    </location>
    <ligand>
        <name>ATP</name>
        <dbReference type="ChEBI" id="CHEBI:30616"/>
    </ligand>
</feature>
<feature type="binding site" evidence="1">
    <location>
        <position position="140"/>
    </location>
    <ligand>
        <name>CTP</name>
        <dbReference type="ChEBI" id="CHEBI:37563"/>
    </ligand>
</feature>
<accession>Q7MBF4</accession>
<sequence length="407" mass="45022">MEIYIVGGAVRDRLLGLPVKDRDWVVVGSTPDEMLAQGYRPVGKDFPVFLHPETQEEYALARTERKIAKGYHGFTFHTSPEVTLEEDLARRDLTINAIAEAADGSLTDPYGGQEDLKAGVLRHVSEAFAEDPVRILRLARFAARFDFAVAPETMALMRRMVDDGEADALVAERVWQELAKGLMEDKPSRMFLTLRECGALARILPEVDALFGVPQRADHHPEIDCGDHVMRVLDYAAAAGQPLAVRFAALGHDLGKALTPAKVLPRHIGHEEGGIAPLAELCRRLRVPNDCRDLAHITMVHHTKVHRALELRPDTVLRLLKDCDALRRPERFLQMLDACLADTRGRLGFERAPYPQKDYLQAQLAATLQIDAGAIAAGCADKAAIPATIDAARTAVIAKCKEEWKED</sequence>
<dbReference type="EC" id="2.7.7.72" evidence="1"/>
<dbReference type="EC" id="3.1.3.-" evidence="1"/>
<dbReference type="EC" id="3.1.4.-" evidence="1"/>
<dbReference type="EMBL" id="AE016825">
    <property type="protein sequence ID" value="AAQ59704.1"/>
    <property type="molecule type" value="Genomic_DNA"/>
</dbReference>
<dbReference type="RefSeq" id="WP_011135580.1">
    <property type="nucleotide sequence ID" value="NC_005085.1"/>
</dbReference>
<dbReference type="SMR" id="Q7MBF4"/>
<dbReference type="STRING" id="243365.CV_2032"/>
<dbReference type="KEGG" id="cvi:CV_2032"/>
<dbReference type="eggNOG" id="COG0617">
    <property type="taxonomic scope" value="Bacteria"/>
</dbReference>
<dbReference type="HOGENOM" id="CLU_015961_1_1_4"/>
<dbReference type="OrthoDB" id="9805698at2"/>
<dbReference type="Proteomes" id="UP000001424">
    <property type="component" value="Chromosome"/>
</dbReference>
<dbReference type="GO" id="GO:0005524">
    <property type="term" value="F:ATP binding"/>
    <property type="evidence" value="ECO:0007669"/>
    <property type="project" value="UniProtKB-UniRule"/>
</dbReference>
<dbReference type="GO" id="GO:0004810">
    <property type="term" value="F:CCA tRNA nucleotidyltransferase activity"/>
    <property type="evidence" value="ECO:0007669"/>
    <property type="project" value="UniProtKB-UniRule"/>
</dbReference>
<dbReference type="GO" id="GO:0004112">
    <property type="term" value="F:cyclic-nucleotide phosphodiesterase activity"/>
    <property type="evidence" value="ECO:0007669"/>
    <property type="project" value="UniProtKB-UniRule"/>
</dbReference>
<dbReference type="GO" id="GO:0000287">
    <property type="term" value="F:magnesium ion binding"/>
    <property type="evidence" value="ECO:0007669"/>
    <property type="project" value="UniProtKB-UniRule"/>
</dbReference>
<dbReference type="GO" id="GO:0016791">
    <property type="term" value="F:phosphatase activity"/>
    <property type="evidence" value="ECO:0007669"/>
    <property type="project" value="UniProtKB-UniRule"/>
</dbReference>
<dbReference type="GO" id="GO:0000049">
    <property type="term" value="F:tRNA binding"/>
    <property type="evidence" value="ECO:0007669"/>
    <property type="project" value="UniProtKB-UniRule"/>
</dbReference>
<dbReference type="GO" id="GO:0042245">
    <property type="term" value="P:RNA repair"/>
    <property type="evidence" value="ECO:0007669"/>
    <property type="project" value="UniProtKB-KW"/>
</dbReference>
<dbReference type="GO" id="GO:0001680">
    <property type="term" value="P:tRNA 3'-terminal CCA addition"/>
    <property type="evidence" value="ECO:0007669"/>
    <property type="project" value="UniProtKB-UniRule"/>
</dbReference>
<dbReference type="CDD" id="cd00077">
    <property type="entry name" value="HDc"/>
    <property type="match status" value="1"/>
</dbReference>
<dbReference type="CDD" id="cd05398">
    <property type="entry name" value="NT_ClassII-CCAase"/>
    <property type="match status" value="1"/>
</dbReference>
<dbReference type="Gene3D" id="3.30.460.10">
    <property type="entry name" value="Beta Polymerase, domain 2"/>
    <property type="match status" value="1"/>
</dbReference>
<dbReference type="Gene3D" id="1.10.3090.10">
    <property type="entry name" value="cca-adding enzyme, domain 2"/>
    <property type="match status" value="1"/>
</dbReference>
<dbReference type="HAMAP" id="MF_01261">
    <property type="entry name" value="CCA_bact_type1"/>
    <property type="match status" value="1"/>
</dbReference>
<dbReference type="HAMAP" id="MF_01262">
    <property type="entry name" value="CCA_bact_type2"/>
    <property type="match status" value="1"/>
</dbReference>
<dbReference type="InterPro" id="IPR012006">
    <property type="entry name" value="CCA_bact"/>
</dbReference>
<dbReference type="InterPro" id="IPR003607">
    <property type="entry name" value="HD/PDEase_dom"/>
</dbReference>
<dbReference type="InterPro" id="IPR006674">
    <property type="entry name" value="HD_domain"/>
</dbReference>
<dbReference type="InterPro" id="IPR043519">
    <property type="entry name" value="NT_sf"/>
</dbReference>
<dbReference type="InterPro" id="IPR002646">
    <property type="entry name" value="PolA_pol_head_dom"/>
</dbReference>
<dbReference type="InterPro" id="IPR032828">
    <property type="entry name" value="PolyA_RNA-bd"/>
</dbReference>
<dbReference type="InterPro" id="IPR050124">
    <property type="entry name" value="tRNA_CCA-adding_enzyme"/>
</dbReference>
<dbReference type="NCBIfam" id="NF008137">
    <property type="entry name" value="PRK10885.1"/>
    <property type="match status" value="1"/>
</dbReference>
<dbReference type="PANTHER" id="PTHR47545">
    <property type="entry name" value="MULTIFUNCTIONAL CCA PROTEIN"/>
    <property type="match status" value="1"/>
</dbReference>
<dbReference type="PANTHER" id="PTHR47545:SF1">
    <property type="entry name" value="MULTIFUNCTIONAL CCA PROTEIN"/>
    <property type="match status" value="1"/>
</dbReference>
<dbReference type="Pfam" id="PF01966">
    <property type="entry name" value="HD"/>
    <property type="match status" value="1"/>
</dbReference>
<dbReference type="Pfam" id="PF01743">
    <property type="entry name" value="PolyA_pol"/>
    <property type="match status" value="1"/>
</dbReference>
<dbReference type="Pfam" id="PF12627">
    <property type="entry name" value="PolyA_pol_RNAbd"/>
    <property type="match status" value="1"/>
</dbReference>
<dbReference type="PIRSF" id="PIRSF000813">
    <property type="entry name" value="CCA_bact"/>
    <property type="match status" value="1"/>
</dbReference>
<dbReference type="SUPFAM" id="SSF81301">
    <property type="entry name" value="Nucleotidyltransferase"/>
    <property type="match status" value="1"/>
</dbReference>
<dbReference type="SUPFAM" id="SSF81891">
    <property type="entry name" value="Poly A polymerase C-terminal region-like"/>
    <property type="match status" value="1"/>
</dbReference>
<dbReference type="PROSITE" id="PS51831">
    <property type="entry name" value="HD"/>
    <property type="match status" value="1"/>
</dbReference>
<gene>
    <name evidence="1" type="primary">cca</name>
    <name type="ordered locus">CV_2032</name>
</gene>
<evidence type="ECO:0000255" key="1">
    <source>
        <dbReference type="HAMAP-Rule" id="MF_01261"/>
    </source>
</evidence>
<name>CCA_CHRVO</name>
<proteinExistence type="inferred from homology"/>
<comment type="function">
    <text evidence="1">Catalyzes the addition and repair of the essential 3'-terminal CCA sequence in tRNAs without using a nucleic acid template. Adds these three nucleotides in the order of C, C, and A to the tRNA nucleotide-73, using CTP and ATP as substrates and producing inorganic pyrophosphate. tRNA 3'-terminal CCA addition is required both for tRNA processing and repair. Also involved in tRNA surveillance by mediating tandem CCA addition to generate a CCACCA at the 3' terminus of unstable tRNAs. While stable tRNAs receive only 3'-terminal CCA, unstable tRNAs are marked with CCACCA and rapidly degraded.</text>
</comment>
<comment type="catalytic activity">
    <reaction evidence="1">
        <text>a tRNA precursor + 2 CTP + ATP = a tRNA with a 3' CCA end + 3 diphosphate</text>
        <dbReference type="Rhea" id="RHEA:14433"/>
        <dbReference type="Rhea" id="RHEA-COMP:10465"/>
        <dbReference type="Rhea" id="RHEA-COMP:10468"/>
        <dbReference type="ChEBI" id="CHEBI:30616"/>
        <dbReference type="ChEBI" id="CHEBI:33019"/>
        <dbReference type="ChEBI" id="CHEBI:37563"/>
        <dbReference type="ChEBI" id="CHEBI:74896"/>
        <dbReference type="ChEBI" id="CHEBI:83071"/>
        <dbReference type="EC" id="2.7.7.72"/>
    </reaction>
</comment>
<comment type="catalytic activity">
    <reaction evidence="1">
        <text>a tRNA with a 3' CCA end + 2 CTP + ATP = a tRNA with a 3' CCACCA end + 3 diphosphate</text>
        <dbReference type="Rhea" id="RHEA:76235"/>
        <dbReference type="Rhea" id="RHEA-COMP:10468"/>
        <dbReference type="Rhea" id="RHEA-COMP:18655"/>
        <dbReference type="ChEBI" id="CHEBI:30616"/>
        <dbReference type="ChEBI" id="CHEBI:33019"/>
        <dbReference type="ChEBI" id="CHEBI:37563"/>
        <dbReference type="ChEBI" id="CHEBI:83071"/>
        <dbReference type="ChEBI" id="CHEBI:195187"/>
    </reaction>
    <physiologicalReaction direction="left-to-right" evidence="1">
        <dbReference type="Rhea" id="RHEA:76236"/>
    </physiologicalReaction>
</comment>
<comment type="cofactor">
    <cofactor evidence="1">
        <name>Mg(2+)</name>
        <dbReference type="ChEBI" id="CHEBI:18420"/>
    </cofactor>
    <text evidence="1">Magnesium is required for nucleotidyltransferase activity.</text>
</comment>
<comment type="cofactor">
    <cofactor evidence="1">
        <name>Ni(2+)</name>
        <dbReference type="ChEBI" id="CHEBI:49786"/>
    </cofactor>
    <text evidence="1">Nickel for phosphatase activity.</text>
</comment>
<comment type="subunit">
    <text evidence="1">Monomer. Can also form homodimers and oligomers.</text>
</comment>
<comment type="domain">
    <text evidence="1">Comprises two domains: an N-terminal domain containing the nucleotidyltransferase activity and a C-terminal HD domain associated with both phosphodiesterase and phosphatase activities.</text>
</comment>
<comment type="miscellaneous">
    <text evidence="1">A single active site specifically recognizes both ATP and CTP and is responsible for their addition.</text>
</comment>
<comment type="similarity">
    <text evidence="1">Belongs to the tRNA nucleotidyltransferase/poly(A) polymerase family. Bacterial CCA-adding enzyme type 1 subfamily.</text>
</comment>